<comment type="function">
    <text evidence="1 2">Involved in the biosynthesis of osmoregulated periplasmic glucans (OPGs). Seems to be required for pathogenicity.</text>
</comment>
<comment type="pathway">
    <text evidence="1">Glycan metabolism; osmoregulated periplasmic glucan (OPG) biosynthesis.</text>
</comment>
<comment type="subcellular location">
    <subcellularLocation>
        <location evidence="1">Cell inner membrane</location>
        <topology evidence="1">Multi-pass membrane protein</topology>
    </subcellularLocation>
</comment>
<comment type="similarity">
    <text evidence="1">Belongs to the glycosyltransferase 2 family. OpgH subfamily.</text>
</comment>
<keyword id="KW-0997">Cell inner membrane</keyword>
<keyword id="KW-1003">Cell membrane</keyword>
<keyword id="KW-0328">Glycosyltransferase</keyword>
<keyword id="KW-0472">Membrane</keyword>
<keyword id="KW-1185">Reference proteome</keyword>
<keyword id="KW-0808">Transferase</keyword>
<keyword id="KW-0812">Transmembrane</keyword>
<keyword id="KW-1133">Transmembrane helix</keyword>
<organism>
    <name type="scientific">Dickeya dadantii (strain 3937)</name>
    <name type="common">Erwinia chrysanthemi (strain 3937)</name>
    <dbReference type="NCBI Taxonomy" id="198628"/>
    <lineage>
        <taxon>Bacteria</taxon>
        <taxon>Pseudomonadati</taxon>
        <taxon>Pseudomonadota</taxon>
        <taxon>Gammaproteobacteria</taxon>
        <taxon>Enterobacterales</taxon>
        <taxon>Pectobacteriaceae</taxon>
        <taxon>Dickeya</taxon>
    </lineage>
</organism>
<proteinExistence type="inferred from homology"/>
<sequence>MNKSTSTLEYIEKLPLPAEQAEALREKFSASQDLSSLHQALSDGSVVTMQSPDDIPLVSVPRRLELAWEDGLNGGKQLGKDREGRTALQAMPRITRASMFPDAWQTNPMVRWWDMINGRSKPLRHHDKTAEENEAENRWRRVGTLRRYVLLLLTLFQTAIATWYMKTILPYQGWALIDPFAMVHQDVWRTIMQLLPYVLQSGILILFAILFCWVSAGFWTALMGFLQLLIGKDKYSISSTTTGNEPLNPEHRTALIMPICNEDVERVFAGLRATYESVEATGELDHFDIYVLSDSNDPDICVAEQKAWMDLCREVGGAGRIFYRRRRRRVKRKSGNIDDFCRRWGNQYSYMVVLDADSVMSGECLTSLVRLMDANPRAGIIQSAPRASGMDTLYARCQQFATRVYGPLFTAGLHFWQLGESHYWGHNAIIRVKPFIEHCALAPLPGEGSFAGSILSHDFVEAALMRRAGWGVWIAYDLPGSYEELPPNLLDELKRDRRWCHGNLMNFRLFLVKGMHPVHRAVFLTGVMSYLSAPLWFMFLALSTALQVVHTLMEPQYFLQPRQLFPVWPQWRPELAIALFSTTLVLLFLPKLLSVILVCAKGAKSYGGVAKLFISLLVEMLFSVLLAPVRMLFHTVFVVSAFLGWSVQWKSPQRDDDATPWSEAFARHGSQLLLGLVWAGGMAWLDLRFLWWLAPIVFSLILSPLVSVLSSRAGLGLACKRAKLLLIPEESDPPRELVATDEYFRRNRERKLDHGFMHAIFDPSINALTSAMATARHRFSRPIEDMREQRVNDALSRKPQDVDCNLRLALMSDPVTLARLHHRVWSQPDTHSDWRSHYQTLAAPVIKSAQ</sequence>
<dbReference type="EC" id="2.4.1.-" evidence="1"/>
<dbReference type="EMBL" id="AJ294718">
    <property type="protein sequence ID" value="CAC13111.1"/>
    <property type="molecule type" value="Genomic_DNA"/>
</dbReference>
<dbReference type="EMBL" id="CP002038">
    <property type="protein sequence ID" value="ADM99013.1"/>
    <property type="molecule type" value="Genomic_DNA"/>
</dbReference>
<dbReference type="RefSeq" id="WP_013318454.1">
    <property type="nucleotide sequence ID" value="NC_014500.1"/>
</dbReference>
<dbReference type="STRING" id="198628.Dda3937_03563"/>
<dbReference type="CAZy" id="GT2">
    <property type="family name" value="Glycosyltransferase Family 2"/>
</dbReference>
<dbReference type="KEGG" id="ddd:Dda3937_03563"/>
<dbReference type="PATRIC" id="fig|198628.6.peg.2806"/>
<dbReference type="eggNOG" id="COG2943">
    <property type="taxonomic scope" value="Bacteria"/>
</dbReference>
<dbReference type="HOGENOM" id="CLU_015730_1_0_6"/>
<dbReference type="OrthoDB" id="9775281at2"/>
<dbReference type="UniPathway" id="UPA00637"/>
<dbReference type="Proteomes" id="UP000006859">
    <property type="component" value="Chromosome"/>
</dbReference>
<dbReference type="GO" id="GO:0005886">
    <property type="term" value="C:plasma membrane"/>
    <property type="evidence" value="ECO:0007669"/>
    <property type="project" value="UniProtKB-SubCell"/>
</dbReference>
<dbReference type="GO" id="GO:0016758">
    <property type="term" value="F:hexosyltransferase activity"/>
    <property type="evidence" value="ECO:0007669"/>
    <property type="project" value="UniProtKB-UniRule"/>
</dbReference>
<dbReference type="GO" id="GO:0009250">
    <property type="term" value="P:glucan biosynthetic process"/>
    <property type="evidence" value="ECO:0007669"/>
    <property type="project" value="UniProtKB-UniRule"/>
</dbReference>
<dbReference type="CDD" id="cd04191">
    <property type="entry name" value="Glucan_BSP_MdoH"/>
    <property type="match status" value="1"/>
</dbReference>
<dbReference type="FunFam" id="3.90.550.10:FF:000047">
    <property type="entry name" value="Glucans biosynthesis glucosyltransferase H"/>
    <property type="match status" value="1"/>
</dbReference>
<dbReference type="Gene3D" id="3.90.550.10">
    <property type="entry name" value="Spore Coat Polysaccharide Biosynthesis Protein SpsA, Chain A"/>
    <property type="match status" value="1"/>
</dbReference>
<dbReference type="HAMAP" id="MF_01072">
    <property type="entry name" value="MdoH_OpgH"/>
    <property type="match status" value="1"/>
</dbReference>
<dbReference type="InterPro" id="IPR023725">
    <property type="entry name" value="Glucans_biosynth_gluTrFase_H"/>
</dbReference>
<dbReference type="InterPro" id="IPR001173">
    <property type="entry name" value="Glyco_trans_2-like"/>
</dbReference>
<dbReference type="InterPro" id="IPR050321">
    <property type="entry name" value="Glycosyltr_2/OpgH_subfam"/>
</dbReference>
<dbReference type="InterPro" id="IPR029044">
    <property type="entry name" value="Nucleotide-diphossugar_trans"/>
</dbReference>
<dbReference type="NCBIfam" id="NF003955">
    <property type="entry name" value="PRK05454.1-1"/>
    <property type="match status" value="1"/>
</dbReference>
<dbReference type="NCBIfam" id="NF003958">
    <property type="entry name" value="PRK05454.2-1"/>
    <property type="match status" value="1"/>
</dbReference>
<dbReference type="NCBIfam" id="NF003962">
    <property type="entry name" value="PRK05454.2-5"/>
    <property type="match status" value="1"/>
</dbReference>
<dbReference type="PANTHER" id="PTHR43867">
    <property type="entry name" value="CELLULOSE SYNTHASE CATALYTIC SUBUNIT A [UDP-FORMING]"/>
    <property type="match status" value="1"/>
</dbReference>
<dbReference type="PANTHER" id="PTHR43867:SF5">
    <property type="entry name" value="GLUCANS BIOSYNTHESIS GLUCOSYLTRANSFERASE H"/>
    <property type="match status" value="1"/>
</dbReference>
<dbReference type="Pfam" id="PF00535">
    <property type="entry name" value="Glycos_transf_2"/>
    <property type="match status" value="1"/>
</dbReference>
<dbReference type="SUPFAM" id="SSF53448">
    <property type="entry name" value="Nucleotide-diphospho-sugar transferases"/>
    <property type="match status" value="1"/>
</dbReference>
<feature type="chain" id="PRO_0000210352" description="Glucans biosynthesis glucosyltransferase H">
    <location>
        <begin position="1"/>
        <end position="850"/>
    </location>
</feature>
<feature type="transmembrane region" description="Helical" evidence="1">
    <location>
        <begin position="148"/>
        <end position="165"/>
    </location>
</feature>
<feature type="transmembrane region" description="Helical" evidence="1">
    <location>
        <begin position="203"/>
        <end position="225"/>
    </location>
</feature>
<feature type="transmembrane region" description="Helical" evidence="1">
    <location>
        <begin position="521"/>
        <end position="543"/>
    </location>
</feature>
<feature type="transmembrane region" description="Helical" evidence="1">
    <location>
        <begin position="577"/>
        <end position="599"/>
    </location>
</feature>
<feature type="transmembrane region" description="Helical" evidence="1">
    <location>
        <begin position="612"/>
        <end position="634"/>
    </location>
</feature>
<feature type="transmembrane region" description="Helical" evidence="1">
    <location>
        <begin position="689"/>
        <end position="711"/>
    </location>
</feature>
<feature type="sequence conflict" description="In Ref. 1; CAC13111." evidence="3" ref="1">
    <original>P</original>
    <variation>A</variation>
    <location>
        <position position="443"/>
    </location>
</feature>
<name>OPGH_DICD3</name>
<gene>
    <name evidence="1" type="primary">opgH</name>
    <name type="ordered locus">Dda3937_03563</name>
</gene>
<protein>
    <recommendedName>
        <fullName evidence="1">Glucans biosynthesis glucosyltransferase H</fullName>
        <ecNumber evidence="1">2.4.1.-</ecNumber>
    </recommendedName>
</protein>
<reference key="1">
    <citation type="journal article" date="2001" name="J. Bacteriol.">
        <title>Osmoregulated periplasmic glucan synthesis is required for Erwinia chrysanthemi pathogenicity.</title>
        <authorList>
            <person name="Page F."/>
            <person name="Altabe S."/>
            <person name="Hugouvieux-Cotte-Pattat N."/>
            <person name="Lacroix J.-M."/>
            <person name="Robert-Baudouy J."/>
            <person name="Bohin J.-P."/>
        </authorList>
    </citation>
    <scope>NUCLEOTIDE SEQUENCE [GENOMIC DNA]</scope>
    <scope>FUNCTION</scope>
    <source>
        <strain>3937</strain>
    </source>
</reference>
<reference key="2">
    <citation type="journal article" date="2011" name="J. Bacteriol.">
        <title>Genome sequence of the plant-pathogenic bacterium Dickeya dadantii 3937.</title>
        <authorList>
            <person name="Glasner J.D."/>
            <person name="Yang C.H."/>
            <person name="Reverchon S."/>
            <person name="Hugouvieux-Cotte-Pattat N."/>
            <person name="Condemine G."/>
            <person name="Bohin J.P."/>
            <person name="Van Gijsegem F."/>
            <person name="Yang S."/>
            <person name="Franza T."/>
            <person name="Expert D."/>
            <person name="Plunkett G. III"/>
            <person name="San Francisco M.J."/>
            <person name="Charkowski A.O."/>
            <person name="Py B."/>
            <person name="Bell K."/>
            <person name="Rauscher L."/>
            <person name="Rodriguez-Palenzuela P."/>
            <person name="Toussaint A."/>
            <person name="Holeva M.C."/>
            <person name="He S.Y."/>
            <person name="Douet V."/>
            <person name="Boccara M."/>
            <person name="Blanco C."/>
            <person name="Toth I."/>
            <person name="Anderson B.D."/>
            <person name="Biehl B.S."/>
            <person name="Mau B."/>
            <person name="Flynn S.M."/>
            <person name="Barras F."/>
            <person name="Lindeberg M."/>
            <person name="Birch P.R."/>
            <person name="Tsuyumu S."/>
            <person name="Shi X."/>
            <person name="Hibbing M."/>
            <person name="Yap M.N."/>
            <person name="Carpentier M."/>
            <person name="Dassa E."/>
            <person name="Umehara M."/>
            <person name="Kim J.F."/>
            <person name="Rusch M."/>
            <person name="Soni P."/>
            <person name="Mayhew G.F."/>
            <person name="Fouts D.E."/>
            <person name="Gill S.R."/>
            <person name="Blattner F.R."/>
            <person name="Keen N.T."/>
            <person name="Perna N.T."/>
        </authorList>
    </citation>
    <scope>NUCLEOTIDE SEQUENCE [LARGE SCALE GENOMIC DNA]</scope>
    <source>
        <strain>3937</strain>
    </source>
</reference>
<evidence type="ECO:0000255" key="1">
    <source>
        <dbReference type="HAMAP-Rule" id="MF_01072"/>
    </source>
</evidence>
<evidence type="ECO:0000269" key="2">
    <source>
    </source>
</evidence>
<evidence type="ECO:0000305" key="3"/>
<accession>Q9F495</accession>
<accession>E0SHS0</accession>